<reference key="1">
    <citation type="journal article" date="1999" name="Plant Cell Physiol.">
        <title>Identification of clp genes expressed in senescing Arabidopsis leaves.</title>
        <authorList>
            <person name="Nakabayashi K."/>
            <person name="Ito M."/>
            <person name="Kiyosue T."/>
            <person name="Shinozaki K."/>
            <person name="Watanabe A."/>
        </authorList>
    </citation>
    <scope>NUCLEOTIDE SEQUENCE [MRNA]</scope>
    <scope>INDUCTION</scope>
    <source>
        <strain>cv. Columbia</strain>
    </source>
</reference>
<reference key="2">
    <citation type="submission" date="1998-02" db="EMBL/GenBank/DDBJ databases">
        <title>A third nuclear-encoded clpP gene from Arabidopsis thaliana.</title>
        <authorList>
            <person name="Clarke A.K."/>
        </authorList>
    </citation>
    <scope>NUCLEOTIDE SEQUENCE [MRNA]</scope>
    <source>
        <strain>cv. Columbia</strain>
    </source>
</reference>
<reference key="3">
    <citation type="journal article" date="1999" name="DNA Res.">
        <title>Structural analysis of Arabidopsis thaliana chromosome 5. IX. Sequence features of the regions of 1,011,550 bp covered by seventeen P1 and TAC clones.</title>
        <authorList>
            <person name="Kaneko T."/>
            <person name="Katoh T."/>
            <person name="Sato S."/>
            <person name="Nakamura Y."/>
            <person name="Asamizu E."/>
            <person name="Kotani H."/>
            <person name="Miyajima N."/>
            <person name="Tabata S."/>
        </authorList>
    </citation>
    <scope>NUCLEOTIDE SEQUENCE [LARGE SCALE GENOMIC DNA]</scope>
    <source>
        <strain>cv. Columbia</strain>
    </source>
</reference>
<reference key="4">
    <citation type="journal article" date="2017" name="Plant J.">
        <title>Araport11: a complete reannotation of the Arabidopsis thaliana reference genome.</title>
        <authorList>
            <person name="Cheng C.Y."/>
            <person name="Krishnakumar V."/>
            <person name="Chan A.P."/>
            <person name="Thibaud-Nissen F."/>
            <person name="Schobel S."/>
            <person name="Town C.D."/>
        </authorList>
    </citation>
    <scope>GENOME REANNOTATION</scope>
    <source>
        <strain>cv. Columbia</strain>
    </source>
</reference>
<reference key="5">
    <citation type="journal article" date="2003" name="Science">
        <title>Empirical analysis of transcriptional activity in the Arabidopsis genome.</title>
        <authorList>
            <person name="Yamada K."/>
            <person name="Lim J."/>
            <person name="Dale J.M."/>
            <person name="Chen H."/>
            <person name="Shinn P."/>
            <person name="Palm C.J."/>
            <person name="Southwick A.M."/>
            <person name="Wu H.C."/>
            <person name="Kim C.J."/>
            <person name="Nguyen M."/>
            <person name="Pham P.K."/>
            <person name="Cheuk R.F."/>
            <person name="Karlin-Newmann G."/>
            <person name="Liu S.X."/>
            <person name="Lam B."/>
            <person name="Sakano H."/>
            <person name="Wu T."/>
            <person name="Yu G."/>
            <person name="Miranda M."/>
            <person name="Quach H.L."/>
            <person name="Tripp M."/>
            <person name="Chang C.H."/>
            <person name="Lee J.M."/>
            <person name="Toriumi M.J."/>
            <person name="Chan M.M."/>
            <person name="Tang C.C."/>
            <person name="Onodera C.S."/>
            <person name="Deng J.M."/>
            <person name="Akiyama K."/>
            <person name="Ansari Y."/>
            <person name="Arakawa T."/>
            <person name="Banh J."/>
            <person name="Banno F."/>
            <person name="Bowser L."/>
            <person name="Brooks S.Y."/>
            <person name="Carninci P."/>
            <person name="Chao Q."/>
            <person name="Choy N."/>
            <person name="Enju A."/>
            <person name="Goldsmith A.D."/>
            <person name="Gurjal M."/>
            <person name="Hansen N.F."/>
            <person name="Hayashizaki Y."/>
            <person name="Johnson-Hopson C."/>
            <person name="Hsuan V.W."/>
            <person name="Iida K."/>
            <person name="Karnes M."/>
            <person name="Khan S."/>
            <person name="Koesema E."/>
            <person name="Ishida J."/>
            <person name="Jiang P.X."/>
            <person name="Jones T."/>
            <person name="Kawai J."/>
            <person name="Kamiya A."/>
            <person name="Meyers C."/>
            <person name="Nakajima M."/>
            <person name="Narusaka M."/>
            <person name="Seki M."/>
            <person name="Sakurai T."/>
            <person name="Satou M."/>
            <person name="Tamse R."/>
            <person name="Vaysberg M."/>
            <person name="Wallender E.K."/>
            <person name="Wong C."/>
            <person name="Yamamura Y."/>
            <person name="Yuan S."/>
            <person name="Shinozaki K."/>
            <person name="Davis R.W."/>
            <person name="Theologis A."/>
            <person name="Ecker J.R."/>
        </authorList>
    </citation>
    <scope>NUCLEOTIDE SEQUENCE [LARGE SCALE MRNA]</scope>
    <source>
        <strain>cv. Columbia</strain>
    </source>
</reference>
<reference key="6">
    <citation type="submission" date="2002-03" db="EMBL/GenBank/DDBJ databases">
        <title>Full-length cDNA from Arabidopsis thaliana.</title>
        <authorList>
            <person name="Brover V.V."/>
            <person name="Troukhan M.E."/>
            <person name="Alexandrov N.A."/>
            <person name="Lu Y.-P."/>
            <person name="Flavell R.B."/>
            <person name="Feldmann K.A."/>
        </authorList>
    </citation>
    <scope>NUCLEOTIDE SEQUENCE [LARGE SCALE MRNA]</scope>
</reference>
<reference key="7">
    <citation type="journal article" date="2001" name="J. Biol. Chem.">
        <title>Identification of a 350-kDa ClpP protease complex with 10 different Clp isoforms in chloroplasts of Arabidopsis thaliana.</title>
        <authorList>
            <person name="Peltier J.-B."/>
            <person name="Ytterberg J."/>
            <person name="Liberles D.A."/>
            <person name="Roepstorff P."/>
            <person name="van Wijk K.J."/>
        </authorList>
    </citation>
    <scope>PROTEIN SEQUENCE OF 75-86; 180-201; 208-219 AND 269-280</scope>
    <scope>SUBUNIT</scope>
    <scope>IDENTIFICATION BY MASS SPECTROMETRY</scope>
</reference>
<reference key="8">
    <citation type="journal article" date="2001" name="Plant Physiol.">
        <title>Chloroplast and mitochondrial proteases in Arabidopsis. A proposed nomenclature.</title>
        <authorList>
            <person name="Adam Z."/>
            <person name="Adamska I."/>
            <person name="Nakabayashi K."/>
            <person name="Ostersetzer O."/>
            <person name="Haussuhl K."/>
            <person name="Manuell A."/>
            <person name="Zheng B."/>
            <person name="Vallon O."/>
            <person name="Rodermel S.R."/>
            <person name="Shinozaki K."/>
            <person name="Clarke A.K."/>
        </authorList>
    </citation>
    <scope>GENE FAMILY</scope>
    <scope>NOMENCLATURE</scope>
</reference>
<reference key="9">
    <citation type="journal article" date="2002" name="Physiol. Plantarum">
        <title>Characterization of chloroplast Clp proteins in Arabidopsis: localization, tissue specificity and stress responses.</title>
        <authorList>
            <person name="Zheng B."/>
            <person name="Halperin T."/>
            <person name="Hruskova-Heidingsfeldova O."/>
            <person name="Adam Z."/>
            <person name="Clarke A.K."/>
        </authorList>
    </citation>
    <scope>SUBCELLULAR LOCATION</scope>
    <scope>INDUCTION</scope>
    <scope>TISSUE SPECIFICITY</scope>
    <source>
        <strain>cv. Columbia</strain>
        <tissue>Seedling</tissue>
    </source>
</reference>
<reference key="10">
    <citation type="journal article" date="2004" name="J. Biol. Chem.">
        <title>Clp protease complexes from photosynthetic and non-photosynthetic plastids and mitochondria of plants, their predicted three-dimensional structures, and functional implications.</title>
        <authorList>
            <person name="Peltier J.-B."/>
            <person name="Ripoll D.R."/>
            <person name="Friso G."/>
            <person name="Rudella A."/>
            <person name="Cai Y."/>
            <person name="Ytterberg J."/>
            <person name="Giacomelli L."/>
            <person name="Pillardy J."/>
            <person name="van Wijk K.J."/>
        </authorList>
    </citation>
    <scope>IDENTIFICATION BY MASS SPECTROMETRY</scope>
    <scope>SUBUNIT</scope>
    <scope>SUBCELLULAR LOCATION</scope>
    <scope>3D-STRUCTURE MODELING</scope>
</reference>
<reference key="11">
    <citation type="journal article" date="2005" name="Physiol. Plantarum">
        <title>The ATP-dependent Clp protease in chloroplasts of higher plants.</title>
        <authorList>
            <person name="Clarke A.K."/>
            <person name="MacDonald T.M."/>
            <person name="Sjoegren L.L."/>
        </authorList>
    </citation>
    <scope>NOMENCLATURE</scope>
</reference>
<reference key="12">
    <citation type="journal article" date="2006" name="Planta">
        <title>A nuclear-encoded ClpP subunit of the chloroplast ATP-dependent Clp protease is essential for early development in Arabidopsis thaliana.</title>
        <authorList>
            <person name="Zheng B."/>
            <person name="MacDonald T.M."/>
            <person name="Sutinen S."/>
            <person name="Hurry V."/>
            <person name="Clarke A.K."/>
        </authorList>
    </citation>
    <scope>FUNCTION</scope>
    <scope>INDUCTION</scope>
</reference>
<reference key="13">
    <citation type="journal article" date="2006" name="Plant Cell">
        <title>Downregulation of ClpR2 leads to reduced accumulation of the ClpPRS protease complex and defects in chloroplast biogenesis in Arabidopsis.</title>
        <authorList>
            <person name="Rudella A."/>
            <person name="Friso G."/>
            <person name="Alonso J.M."/>
            <person name="Ecker J.R."/>
            <person name="van Wijk K.J."/>
        </authorList>
    </citation>
    <scope>IDENTIFICATION BY MASS SPECTROMETRY</scope>
    <scope>SUBUNIT</scope>
</reference>
<reference key="14">
    <citation type="journal article" date="2006" name="Plant Cell">
        <title>Structural and functional insights into the chloroplast ATP-dependent Clp protease in Arabidopsis.</title>
        <authorList>
            <person name="Sjoegren L.L.E."/>
            <person name="Stanne T.M."/>
            <person name="Zheng B."/>
            <person name="Sutinen S."/>
            <person name="Clarke A.K."/>
        </authorList>
    </citation>
    <scope>SUBUNIT</scope>
</reference>
<reference key="15">
    <citation type="journal article" date="2007" name="Plant J.">
        <title>The chloroplast protease subunit ClpP4 is a substrate of the E3 ligase AtCHIP and plays an important role in chloroplast function.</title>
        <authorList>
            <person name="Shen G."/>
            <person name="Yan J."/>
            <person name="Pasapula V."/>
            <person name="Luo J."/>
            <person name="He C."/>
            <person name="Clarke A.K."/>
            <person name="Zhang H."/>
        </authorList>
    </citation>
    <scope>FUNCTION</scope>
    <scope>UBIQUITINATION</scope>
    <scope>INTERACTION WITH CHIP</scope>
</reference>
<reference key="16">
    <citation type="journal article" date="2011" name="Plant Cell">
        <title>Subunit stoichiometry, evolution, and functional implications of an asymmetric plant plastid ClpP/R protease complex in Arabidopsis.</title>
        <authorList>
            <person name="Olinares P.D."/>
            <person name="Kim J."/>
            <person name="Davis J.I."/>
            <person name="van Wijk K.J."/>
        </authorList>
    </citation>
    <scope>IDENTIFICATION BY MASS SPECTROMETRY</scope>
    <scope>SUBUNIT</scope>
</reference>
<reference key="17">
    <citation type="journal article" date="2012" name="Mol. Cell. Proteomics">
        <title>Comparative large-scale characterisation of plant vs. mammal proteins reveals similar and idiosyncratic N-alpha acetylation features.</title>
        <authorList>
            <person name="Bienvenut W.V."/>
            <person name="Sumpton D."/>
            <person name="Martinez A."/>
            <person name="Lilla S."/>
            <person name="Espagne C."/>
            <person name="Meinnel T."/>
            <person name="Giglione C."/>
        </authorList>
    </citation>
    <scope>ACETYLATION [LARGE SCALE ANALYSIS] AT SER-66</scope>
    <scope>CLEAVAGE OF TRANSIT PEPTIDE [LARGE SCALE ANALYSIS] AFTER MET-65</scope>
    <scope>IDENTIFICATION BY MASS SPECTROMETRY [LARGE SCALE ANALYSIS]</scope>
</reference>
<reference key="18">
    <citation type="journal article" date="2012" name="Physiol. Plantarum">
        <title>The chloroplast ATP-dependent Clp protease in vascular plants - new dimensions and future challenges.</title>
        <authorList>
            <person name="Clarke A.K."/>
        </authorList>
    </citation>
    <scope>REVIEW</scope>
</reference>
<reference key="19">
    <citation type="journal article" date="2013" name="Plant Physiol.">
        <title>Modified Clp protease complex in the ClpP3 null mutant and consequences for chloroplast development and function in Arabidopsis.</title>
        <authorList>
            <person name="Kim J."/>
            <person name="Olinares P.D."/>
            <person name="Oh S.H."/>
            <person name="Ghisaura S."/>
            <person name="Poliakov A."/>
            <person name="Ponnala L."/>
            <person name="van Wijk K.J."/>
        </authorList>
    </citation>
    <scope>FUNCTION</scope>
    <scope>DISRUPTION PHENOTYPE</scope>
</reference>
<feature type="transit peptide" description="Chloroplast" evidence="16">
    <location>
        <begin position="1"/>
        <end position="65"/>
    </location>
</feature>
<feature type="chain" id="PRO_0000308979" description="ATP-dependent Clp protease proteolytic subunit 4, chloroplastic">
    <location>
        <begin position="66"/>
        <end position="292"/>
    </location>
</feature>
<feature type="active site" description="Nucleophile" evidence="1">
    <location>
        <position position="158"/>
    </location>
</feature>
<feature type="active site" evidence="1">
    <location>
        <position position="183"/>
    </location>
</feature>
<feature type="modified residue" description="N-acetylserine" evidence="16">
    <location>
        <position position="66"/>
    </location>
</feature>
<feature type="sequence conflict" description="In Ref. 2; CAA04393." evidence="13" ref="2">
    <original>MGT</original>
    <variation>TRP</variation>
    <location>
        <begin position="1"/>
        <end position="3"/>
    </location>
</feature>
<feature type="sequence conflict" description="In Ref. 2; CAA04393." evidence="13" ref="2">
    <original>R</original>
    <variation>T</variation>
    <location>
        <position position="57"/>
    </location>
</feature>
<feature type="sequence conflict" description="In Ref. 2; CAA04393." evidence="13" ref="2">
    <original>K</original>
    <variation>N</variation>
    <location>
        <position position="171"/>
    </location>
</feature>
<feature type="sequence conflict" description="In Ref. 6; AAM65254." evidence="13" ref="6">
    <original>A</original>
    <variation>V</variation>
    <location>
        <position position="193"/>
    </location>
</feature>
<feature type="sequence conflict" description="In Ref. 6; AAM65254." evidence="13" ref="6">
    <original>M</original>
    <variation>I</variation>
    <location>
        <position position="279"/>
    </location>
</feature>
<proteinExistence type="evidence at protein level"/>
<protein>
    <recommendedName>
        <fullName evidence="12">ATP-dependent Clp protease proteolytic subunit 4, chloroplastic</fullName>
        <ecNumber>3.4.21.92</ecNumber>
    </recommendedName>
    <alternativeName>
        <fullName evidence="12">Endopeptidase ClpP4</fullName>
        <shortName>nClpP4</shortName>
    </alternativeName>
    <alternativeName>
        <fullName>nClpP3</fullName>
    </alternativeName>
</protein>
<evidence type="ECO:0000250" key="1"/>
<evidence type="ECO:0000269" key="2">
    <source>
    </source>
</evidence>
<evidence type="ECO:0000269" key="3">
    <source>
    </source>
</evidence>
<evidence type="ECO:0000269" key="4">
    <source>
    </source>
</evidence>
<evidence type="ECO:0000269" key="5">
    <source>
    </source>
</evidence>
<evidence type="ECO:0000269" key="6">
    <source>
    </source>
</evidence>
<evidence type="ECO:0000269" key="7">
    <source>
    </source>
</evidence>
<evidence type="ECO:0000269" key="8">
    <source>
    </source>
</evidence>
<evidence type="ECO:0000269" key="9">
    <source>
    </source>
</evidence>
<evidence type="ECO:0000269" key="10">
    <source>
    </source>
</evidence>
<evidence type="ECO:0000269" key="11">
    <source>
    </source>
</evidence>
<evidence type="ECO:0000303" key="12">
    <source>
    </source>
</evidence>
<evidence type="ECO:0000305" key="13"/>
<evidence type="ECO:0000312" key="14">
    <source>
        <dbReference type="Araport" id="AT5G45390"/>
    </source>
</evidence>
<evidence type="ECO:0000312" key="15">
    <source>
        <dbReference type="EMBL" id="BAB09167.1"/>
    </source>
</evidence>
<evidence type="ECO:0007744" key="16">
    <source>
    </source>
</evidence>
<organism>
    <name type="scientific">Arabidopsis thaliana</name>
    <name type="common">Mouse-ear cress</name>
    <dbReference type="NCBI Taxonomy" id="3702"/>
    <lineage>
        <taxon>Eukaryota</taxon>
        <taxon>Viridiplantae</taxon>
        <taxon>Streptophyta</taxon>
        <taxon>Embryophyta</taxon>
        <taxon>Tracheophyta</taxon>
        <taxon>Spermatophyta</taxon>
        <taxon>Magnoliopsida</taxon>
        <taxon>eudicotyledons</taxon>
        <taxon>Gunneridae</taxon>
        <taxon>Pentapetalae</taxon>
        <taxon>rosids</taxon>
        <taxon>malvids</taxon>
        <taxon>Brassicales</taxon>
        <taxon>Brassicaceae</taxon>
        <taxon>Camelineae</taxon>
        <taxon>Arabidopsis</taxon>
    </lineage>
</organism>
<sequence length="292" mass="31498">MGTLSLSSSLKPSLVSSRLNSSSSASSSSFPKPNNLYLKPTKLISPPLRTTSPSPLRFANASIEMSQTQESAIRGAESDVMGLLLRERIVFLGSSIDDFVADAIMSQLLLLDAKDPKKDIKLFINSPGGSLSATMAIYDVVQLVRADVSTIALGIAASTASIILGAGTKGKRFAMPNTRIMIHQPLGGASGQAIDVEIQAKEVMHNKNNVTSIIAGCTSRSFEQVLKDIDRDRYMSPIEAVEYGLIDGVIDGDSIIPLEPVPDRVKPRVNYEEISKDPMKFLTPEIPDDEIY</sequence>
<name>CLPP4_ARATH</name>
<keyword id="KW-0007">Acetylation</keyword>
<keyword id="KW-0150">Chloroplast</keyword>
<keyword id="KW-0903">Direct protein sequencing</keyword>
<keyword id="KW-0378">Hydrolase</keyword>
<keyword id="KW-0934">Plastid</keyword>
<keyword id="KW-0645">Protease</keyword>
<keyword id="KW-1185">Reference proteome</keyword>
<keyword id="KW-0720">Serine protease</keyword>
<keyword id="KW-0809">Transit peptide</keyword>
<keyword id="KW-0832">Ubl conjugation</keyword>
<comment type="function">
    <text evidence="1 6 9 11">Cleaves peptides in various proteins in a process that requires ATP hydrolysis. Has a chymotrypsin-like activity. Plays a major role in the degradation of misfolded proteins (By similarity). Essential protein required for chloroplast development and integrity (PubMed:16705403, PubMed:17241447). Essential for Embryogenesis (PubMed:23548781).</text>
</comment>
<comment type="catalytic activity">
    <reaction>
        <text>Hydrolysis of proteins to small peptides in the presence of ATP and magnesium. alpha-casein is the usual test substrate. In the absence of ATP, only oligopeptides shorter than five residues are hydrolyzed (such as succinyl-Leu-Tyr-|-NHMec, and Leu-Tyr-Leu-|-Tyr-Trp, in which cleavage of the -Tyr-|-Leu- and -Tyr-|-Trp bonds also occurs).</text>
        <dbReference type="EC" id="3.4.21.92"/>
    </reaction>
</comment>
<comment type="subunit">
    <text evidence="3 5 7 8 9 10">Component of the chloroplastic Clp protease core complex which consist of at least 16 proteins: CLPP4 (3 copies), CLPP5 (3 copies), CLPR4 (2 copies), ClpP1 (1 copy), CLPP6 (1 copy), CLPR2 (1 copy), CLPT1 (1 copy), CLPT2 (1 copy) and 3 copies of CLPP3 and/or CLPR1 and/or CLPR3 (PubMed:11278690, PubMed:14593120, PubMed:16766689, PubMed:16980539). Interacts with CHIP (PubMed:17241447). The core complex is organized in two heptameric rings, one containing CLPP3,4,5,6 in a 1:2:3:1 ratio and the other CLPP1 and CLPR1,2,3,4 in a 3:1:1:1:1 ratio (PubMed:21712416).</text>
</comment>
<comment type="subcellular location">
    <subcellularLocation>
        <location evidence="4 5">Plastid</location>
        <location evidence="4 5">Chloroplast stroma</location>
    </subcellularLocation>
</comment>
<comment type="tissue specificity">
    <text evidence="4">Mostly expressed in leaves. Also detected in stems, and to a lower extent, in roots (at protein level).</text>
</comment>
<comment type="induction">
    <text evidence="2 4 6">Repressed in darkness. Levels decrease in leaves during aging (at protein level). Slightly and transiently repressed by high light stress (at protein level).</text>
</comment>
<comment type="PTM">
    <text evidence="9">Ubiquitinated by CHIP.</text>
</comment>
<comment type="disruption phenotype">
    <text evidence="11">Embryo lethal when homozygous.</text>
</comment>
<comment type="similarity">
    <text evidence="13">Belongs to the peptidase S14 family.</text>
</comment>
<comment type="sequence caution" evidence="13">
    <conflict type="erroneous initiation">
        <sequence resource="EMBL-CDS" id="BAA82068"/>
    </conflict>
    <text>Extended N-terminus.</text>
</comment>
<comment type="sequence caution" evidence="13">
    <conflict type="erroneous gene model prediction">
        <sequence resource="EMBL-CDS" id="BAB09167"/>
    </conflict>
</comment>
<comment type="sequence caution" evidence="13">
    <conflict type="erroneous initiation">
        <sequence resource="EMBL-CDS" id="CAA04393"/>
    </conflict>
    <text>Truncated N-terminus.</text>
</comment>
<gene>
    <name evidence="12" type="primary">CLPP4</name>
    <name type="synonym">NCLPP3</name>
    <name type="synonym">NCLPP4</name>
    <name evidence="14" type="ordered locus">At5g45390</name>
    <name evidence="15" type="ORF">MFC19.5</name>
</gene>
<dbReference type="EC" id="3.4.21.92"/>
<dbReference type="EMBL" id="AB022329">
    <property type="protein sequence ID" value="BAA82068.1"/>
    <property type="status" value="ALT_INIT"/>
    <property type="molecule type" value="mRNA"/>
</dbReference>
<dbReference type="EMBL" id="AJ000930">
    <property type="protein sequence ID" value="CAA04393.1"/>
    <property type="status" value="ALT_INIT"/>
    <property type="molecule type" value="mRNA"/>
</dbReference>
<dbReference type="EMBL" id="AB018113">
    <property type="protein sequence ID" value="BAB09167.1"/>
    <property type="status" value="ALT_SEQ"/>
    <property type="molecule type" value="Genomic_DNA"/>
</dbReference>
<dbReference type="EMBL" id="CP002688">
    <property type="protein sequence ID" value="AED95243.1"/>
    <property type="molecule type" value="Genomic_DNA"/>
</dbReference>
<dbReference type="EMBL" id="AY042832">
    <property type="protein sequence ID" value="AAK68772.1"/>
    <property type="molecule type" value="mRNA"/>
</dbReference>
<dbReference type="EMBL" id="BT006321">
    <property type="protein sequence ID" value="AAP13429.1"/>
    <property type="molecule type" value="mRNA"/>
</dbReference>
<dbReference type="EMBL" id="AY087717">
    <property type="protein sequence ID" value="AAM65254.1"/>
    <property type="molecule type" value="mRNA"/>
</dbReference>
<dbReference type="PIR" id="T52452">
    <property type="entry name" value="T52452"/>
</dbReference>
<dbReference type="RefSeq" id="NP_568644.1">
    <property type="nucleotide sequence ID" value="NM_123907.4"/>
</dbReference>
<dbReference type="SMR" id="Q94B60"/>
<dbReference type="BioGRID" id="19824">
    <property type="interactions" value="8"/>
</dbReference>
<dbReference type="FunCoup" id="Q94B60">
    <property type="interactions" value="1353"/>
</dbReference>
<dbReference type="IntAct" id="Q94B60">
    <property type="interactions" value="2"/>
</dbReference>
<dbReference type="STRING" id="3702.Q94B60"/>
<dbReference type="MEROPS" id="S14.010"/>
<dbReference type="iPTMnet" id="Q94B60"/>
<dbReference type="PaxDb" id="3702-AT5G45390.1"/>
<dbReference type="ProteomicsDB" id="241064"/>
<dbReference type="EnsemblPlants" id="AT5G45390.1">
    <property type="protein sequence ID" value="AT5G45390.1"/>
    <property type="gene ID" value="AT5G45390"/>
</dbReference>
<dbReference type="GeneID" id="834575"/>
<dbReference type="Gramene" id="AT5G45390.1">
    <property type="protein sequence ID" value="AT5G45390.1"/>
    <property type="gene ID" value="AT5G45390"/>
</dbReference>
<dbReference type="KEGG" id="ath:AT5G45390"/>
<dbReference type="Araport" id="AT5G45390"/>
<dbReference type="TAIR" id="AT5G45390">
    <property type="gene designation" value="CLPP4"/>
</dbReference>
<dbReference type="eggNOG" id="KOG0840">
    <property type="taxonomic scope" value="Eukaryota"/>
</dbReference>
<dbReference type="HOGENOM" id="CLU_058707_1_0_1"/>
<dbReference type="InParanoid" id="Q94B60"/>
<dbReference type="OMA" id="YPSRKTP"/>
<dbReference type="PhylomeDB" id="Q94B60"/>
<dbReference type="CD-CODE" id="4299E36E">
    <property type="entry name" value="Nucleolus"/>
</dbReference>
<dbReference type="PRO" id="PR:Q94B60"/>
<dbReference type="Proteomes" id="UP000006548">
    <property type="component" value="Chromosome 5"/>
</dbReference>
<dbReference type="ExpressionAtlas" id="Q94B60">
    <property type="expression patterns" value="baseline and differential"/>
</dbReference>
<dbReference type="GO" id="GO:0009507">
    <property type="term" value="C:chloroplast"/>
    <property type="evidence" value="ECO:0007005"/>
    <property type="project" value="TAIR"/>
</dbReference>
<dbReference type="GO" id="GO:0009941">
    <property type="term" value="C:chloroplast envelope"/>
    <property type="evidence" value="ECO:0007005"/>
    <property type="project" value="TAIR"/>
</dbReference>
<dbReference type="GO" id="GO:0009570">
    <property type="term" value="C:chloroplast stroma"/>
    <property type="evidence" value="ECO:0007005"/>
    <property type="project" value="TAIR"/>
</dbReference>
<dbReference type="GO" id="GO:0009535">
    <property type="term" value="C:chloroplast thylakoid membrane"/>
    <property type="evidence" value="ECO:0000314"/>
    <property type="project" value="TAIR"/>
</dbReference>
<dbReference type="GO" id="GO:0009840">
    <property type="term" value="C:chloroplastic endopeptidase Clp complex"/>
    <property type="evidence" value="ECO:0000314"/>
    <property type="project" value="TAIR"/>
</dbReference>
<dbReference type="GO" id="GO:0009536">
    <property type="term" value="C:plastid"/>
    <property type="evidence" value="ECO:0007005"/>
    <property type="project" value="TAIR"/>
</dbReference>
<dbReference type="GO" id="GO:0009532">
    <property type="term" value="C:plastid stroma"/>
    <property type="evidence" value="ECO:0000314"/>
    <property type="project" value="TAIR"/>
</dbReference>
<dbReference type="GO" id="GO:0009579">
    <property type="term" value="C:thylakoid"/>
    <property type="evidence" value="ECO:0007005"/>
    <property type="project" value="TAIR"/>
</dbReference>
<dbReference type="GO" id="GO:0004176">
    <property type="term" value="F:ATP-dependent peptidase activity"/>
    <property type="evidence" value="ECO:0007669"/>
    <property type="project" value="InterPro"/>
</dbReference>
<dbReference type="GO" id="GO:0004252">
    <property type="term" value="F:serine-type endopeptidase activity"/>
    <property type="evidence" value="ECO:0007669"/>
    <property type="project" value="UniProtKB-EC"/>
</dbReference>
<dbReference type="GO" id="GO:0009658">
    <property type="term" value="P:chloroplast organization"/>
    <property type="evidence" value="ECO:0000315"/>
    <property type="project" value="TAIR"/>
</dbReference>
<dbReference type="GO" id="GO:0006508">
    <property type="term" value="P:proteolysis"/>
    <property type="evidence" value="ECO:0007669"/>
    <property type="project" value="UniProtKB-KW"/>
</dbReference>
<dbReference type="GO" id="GO:0048510">
    <property type="term" value="P:regulation of timing of transition from vegetative to reproductive phase"/>
    <property type="evidence" value="ECO:0000315"/>
    <property type="project" value="TAIR"/>
</dbReference>
<dbReference type="CDD" id="cd07017">
    <property type="entry name" value="S14_ClpP_2"/>
    <property type="match status" value="1"/>
</dbReference>
<dbReference type="FunFam" id="3.90.226.10:FF:000001">
    <property type="entry name" value="ATP-dependent Clp protease proteolytic subunit"/>
    <property type="match status" value="1"/>
</dbReference>
<dbReference type="Gene3D" id="3.90.226.10">
    <property type="entry name" value="2-enoyl-CoA Hydratase, Chain A, domain 1"/>
    <property type="match status" value="1"/>
</dbReference>
<dbReference type="HAMAP" id="MF_00444">
    <property type="entry name" value="ClpP"/>
    <property type="match status" value="1"/>
</dbReference>
<dbReference type="InterPro" id="IPR001907">
    <property type="entry name" value="ClpP"/>
</dbReference>
<dbReference type="InterPro" id="IPR029045">
    <property type="entry name" value="ClpP/crotonase-like_dom_sf"/>
</dbReference>
<dbReference type="InterPro" id="IPR023562">
    <property type="entry name" value="ClpP/TepA"/>
</dbReference>
<dbReference type="InterPro" id="IPR033135">
    <property type="entry name" value="ClpP_His_AS"/>
</dbReference>
<dbReference type="NCBIfam" id="NF009205">
    <property type="entry name" value="PRK12553.1"/>
    <property type="match status" value="1"/>
</dbReference>
<dbReference type="PANTHER" id="PTHR10381">
    <property type="entry name" value="ATP-DEPENDENT CLP PROTEASE PROTEOLYTIC SUBUNIT"/>
    <property type="match status" value="1"/>
</dbReference>
<dbReference type="PANTHER" id="PTHR10381:SF24">
    <property type="entry name" value="ATP-DEPENDENT CLP PROTEASE PROTEOLYTIC SUBUNIT 4, CHLOROPLASTIC"/>
    <property type="match status" value="1"/>
</dbReference>
<dbReference type="Pfam" id="PF00574">
    <property type="entry name" value="CLP_protease"/>
    <property type="match status" value="1"/>
</dbReference>
<dbReference type="PRINTS" id="PR00127">
    <property type="entry name" value="CLPPROTEASEP"/>
</dbReference>
<dbReference type="SUPFAM" id="SSF52096">
    <property type="entry name" value="ClpP/crotonase"/>
    <property type="match status" value="1"/>
</dbReference>
<dbReference type="PROSITE" id="PS00382">
    <property type="entry name" value="CLP_PROTEASE_HIS"/>
    <property type="match status" value="1"/>
</dbReference>
<accession>Q94B60</accession>
<accession>Q8LAN0</accession>
<accession>Q9FHJ7</accession>
<accession>Q9SXJ5</accession>
<accession>Q9ZS78</accession>